<sequence length="323" mass="36302">MNIENNEHSFRPHPELGEHISFTKEQPIDIHDSLASLIETVAPLEIDLVLEGETGTGKDTLARKIHRLSGCSGRLIAVNCAAIPETLAESELFGVNNGAYTGAVQARAGYIEEANNGILFLDEIDSMPLSLQAKLLRVLENRGIERLGGTRFIPVNMRVIVATQKPLLTLVEQGTFRRDLYFRLNTLSIQLQPLRSQVEIIIPLFRHFIAKAATTMQCTPPEITQELCEYLLSYSWPGNIRELKTAAKRFTLGLPPLNVPRNAERQGPQLKEILRRIEKSLIHDCLVRHGHSIDEAAMELGMPLRTLYHRIKLLNVTTQRIIV</sequence>
<reference key="1">
    <citation type="journal article" date="1993" name="Mol. Microbiol.">
        <title>Erwinia stewartii WtsA, a positive regulator of pathogenicity gene expression, is similar to Pseudomonas syringae pv. phaseolicola HrpS.</title>
        <authorList>
            <person name="Frederick R.D."/>
            <person name="Majerczak D.R."/>
            <person name="Coplin D.L."/>
        </authorList>
    </citation>
    <scope>NUCLEOTIDE SEQUENCE [GENOMIC DNA]</scope>
</reference>
<gene>
    <name type="primary">wtsA</name>
</gene>
<keyword id="KW-0010">Activator</keyword>
<keyword id="KW-0067">ATP-binding</keyword>
<keyword id="KW-0238">DNA-binding</keyword>
<keyword id="KW-0928">Hypersensitive response elicitation</keyword>
<keyword id="KW-0547">Nucleotide-binding</keyword>
<keyword id="KW-0804">Transcription</keyword>
<keyword id="KW-0805">Transcription regulation</keyword>
<keyword id="KW-0902">Two-component regulatory system</keyword>
<protein>
    <recommendedName>
        <fullName>Pathogenicity locus probable regulatory protein WtsA</fullName>
    </recommendedName>
</protein>
<name>WTSA_PANSE</name>
<comment type="function">
    <text>Positive activator of wtsB involved in plant pathogenicity. Probably interacts with sigma-54.</text>
</comment>
<organism>
    <name type="scientific">Pantoea stewartii subsp. stewartii</name>
    <name type="common">Erwinia stewartii</name>
    <dbReference type="NCBI Taxonomy" id="66271"/>
    <lineage>
        <taxon>Bacteria</taxon>
        <taxon>Pseudomonadati</taxon>
        <taxon>Pseudomonadota</taxon>
        <taxon>Gammaproteobacteria</taxon>
        <taxon>Enterobacterales</taxon>
        <taxon>Erwiniaceae</taxon>
        <taxon>Pantoea</taxon>
    </lineage>
</organism>
<proteinExistence type="predicted"/>
<accession>P36219</accession>
<dbReference type="EMBL" id="AF282857">
    <property type="protein sequence ID" value="AAC36805.1"/>
    <property type="molecule type" value="Genomic_DNA"/>
</dbReference>
<dbReference type="PIR" id="S36185">
    <property type="entry name" value="S36185"/>
</dbReference>
<dbReference type="RefSeq" id="WP_006121868.1">
    <property type="nucleotide sequence ID" value="NZ_JANUQT010000016.1"/>
</dbReference>
<dbReference type="SMR" id="P36219"/>
<dbReference type="GO" id="GO:0005524">
    <property type="term" value="F:ATP binding"/>
    <property type="evidence" value="ECO:0007669"/>
    <property type="project" value="UniProtKB-KW"/>
</dbReference>
<dbReference type="GO" id="GO:0016887">
    <property type="term" value="F:ATP hydrolysis activity"/>
    <property type="evidence" value="ECO:0007669"/>
    <property type="project" value="InterPro"/>
</dbReference>
<dbReference type="GO" id="GO:0043565">
    <property type="term" value="F:sequence-specific DNA binding"/>
    <property type="evidence" value="ECO:0007669"/>
    <property type="project" value="InterPro"/>
</dbReference>
<dbReference type="GO" id="GO:0000160">
    <property type="term" value="P:phosphorelay signal transduction system"/>
    <property type="evidence" value="ECO:0007669"/>
    <property type="project" value="UniProtKB-KW"/>
</dbReference>
<dbReference type="GO" id="GO:0006355">
    <property type="term" value="P:regulation of DNA-templated transcription"/>
    <property type="evidence" value="ECO:0007669"/>
    <property type="project" value="InterPro"/>
</dbReference>
<dbReference type="GO" id="GO:0052040">
    <property type="term" value="P:symbiont-mediated perturbation of host programmed cell death"/>
    <property type="evidence" value="ECO:0007669"/>
    <property type="project" value="UniProtKB-KW"/>
</dbReference>
<dbReference type="CDD" id="cd00009">
    <property type="entry name" value="AAA"/>
    <property type="match status" value="1"/>
</dbReference>
<dbReference type="FunFam" id="3.40.50.300:FF:000006">
    <property type="entry name" value="DNA-binding transcriptional regulator NtrC"/>
    <property type="match status" value="1"/>
</dbReference>
<dbReference type="Gene3D" id="1.10.8.60">
    <property type="match status" value="1"/>
</dbReference>
<dbReference type="Gene3D" id="1.10.10.60">
    <property type="entry name" value="Homeodomain-like"/>
    <property type="match status" value="1"/>
</dbReference>
<dbReference type="Gene3D" id="3.40.50.300">
    <property type="entry name" value="P-loop containing nucleotide triphosphate hydrolases"/>
    <property type="match status" value="1"/>
</dbReference>
<dbReference type="InterPro" id="IPR003593">
    <property type="entry name" value="AAA+_ATPase"/>
</dbReference>
<dbReference type="InterPro" id="IPR009057">
    <property type="entry name" value="Homeodomain-like_sf"/>
</dbReference>
<dbReference type="InterPro" id="IPR002197">
    <property type="entry name" value="HTH_Fis"/>
</dbReference>
<dbReference type="InterPro" id="IPR027417">
    <property type="entry name" value="P-loop_NTPase"/>
</dbReference>
<dbReference type="InterPro" id="IPR002078">
    <property type="entry name" value="Sigma_54_int"/>
</dbReference>
<dbReference type="InterPro" id="IPR025662">
    <property type="entry name" value="Sigma_54_int_dom_ATP-bd_1"/>
</dbReference>
<dbReference type="InterPro" id="IPR025943">
    <property type="entry name" value="Sigma_54_int_dom_ATP-bd_2"/>
</dbReference>
<dbReference type="InterPro" id="IPR025944">
    <property type="entry name" value="Sigma_54_int_dom_CS"/>
</dbReference>
<dbReference type="PANTHER" id="PTHR32071:SF57">
    <property type="entry name" value="C4-DICARBOXYLATE TRANSPORT TRANSCRIPTIONAL REGULATORY PROTEIN DCTD"/>
    <property type="match status" value="1"/>
</dbReference>
<dbReference type="PANTHER" id="PTHR32071">
    <property type="entry name" value="TRANSCRIPTIONAL REGULATORY PROTEIN"/>
    <property type="match status" value="1"/>
</dbReference>
<dbReference type="Pfam" id="PF02954">
    <property type="entry name" value="HTH_8"/>
    <property type="match status" value="1"/>
</dbReference>
<dbReference type="Pfam" id="PF00158">
    <property type="entry name" value="Sigma54_activat"/>
    <property type="match status" value="1"/>
</dbReference>
<dbReference type="SMART" id="SM00382">
    <property type="entry name" value="AAA"/>
    <property type="match status" value="1"/>
</dbReference>
<dbReference type="SUPFAM" id="SSF46689">
    <property type="entry name" value="Homeodomain-like"/>
    <property type="match status" value="1"/>
</dbReference>
<dbReference type="SUPFAM" id="SSF52540">
    <property type="entry name" value="P-loop containing nucleoside triphosphate hydrolases"/>
    <property type="match status" value="1"/>
</dbReference>
<dbReference type="PROSITE" id="PS00675">
    <property type="entry name" value="SIGMA54_INTERACT_1"/>
    <property type="match status" value="1"/>
</dbReference>
<dbReference type="PROSITE" id="PS00676">
    <property type="entry name" value="SIGMA54_INTERACT_2"/>
    <property type="match status" value="1"/>
</dbReference>
<dbReference type="PROSITE" id="PS00688">
    <property type="entry name" value="SIGMA54_INTERACT_3"/>
    <property type="match status" value="1"/>
</dbReference>
<dbReference type="PROSITE" id="PS50045">
    <property type="entry name" value="SIGMA54_INTERACT_4"/>
    <property type="match status" value="1"/>
</dbReference>
<evidence type="ECO:0000250" key="1"/>
<evidence type="ECO:0000255" key="2">
    <source>
        <dbReference type="PROSITE-ProRule" id="PRU00193"/>
    </source>
</evidence>
<feature type="chain" id="PRO_0000081330" description="Pathogenicity locus probable regulatory protein WtsA">
    <location>
        <begin position="1"/>
        <end position="323"/>
    </location>
</feature>
<feature type="domain" description="Sigma-54 factor interaction" evidence="2">
    <location>
        <begin position="41"/>
        <end position="251"/>
    </location>
</feature>
<feature type="DNA-binding region" description="H-T-H motif" evidence="1">
    <location>
        <begin position="293"/>
        <end position="312"/>
    </location>
</feature>
<feature type="binding site" evidence="2">
    <location>
        <begin position="52"/>
        <end position="59"/>
    </location>
    <ligand>
        <name>ATP</name>
        <dbReference type="ChEBI" id="CHEBI:30616"/>
    </ligand>
</feature>
<feature type="binding site" evidence="2">
    <location>
        <begin position="123"/>
        <end position="132"/>
    </location>
    <ligand>
        <name>ATP</name>
        <dbReference type="ChEBI" id="CHEBI:30616"/>
    </ligand>
</feature>